<gene>
    <name type="ordered locus">APE_0788.1</name>
</gene>
<dbReference type="EC" id="3.6.1.73" evidence="1"/>
<dbReference type="EMBL" id="BA000002">
    <property type="protein sequence ID" value="BAA79766.2"/>
    <property type="molecule type" value="Genomic_DNA"/>
</dbReference>
<dbReference type="PIR" id="F72670">
    <property type="entry name" value="F72670"/>
</dbReference>
<dbReference type="RefSeq" id="WP_010865974.1">
    <property type="nucleotide sequence ID" value="NC_000854.2"/>
</dbReference>
<dbReference type="SMR" id="Q9YDY1"/>
<dbReference type="STRING" id="272557.APE_0788.1"/>
<dbReference type="EnsemblBacteria" id="BAA79766">
    <property type="protein sequence ID" value="BAA79766"/>
    <property type="gene ID" value="APE_0788.1"/>
</dbReference>
<dbReference type="GeneID" id="1444898"/>
<dbReference type="KEGG" id="ape:APE_0788.1"/>
<dbReference type="eggNOG" id="arCOG01221">
    <property type="taxonomic scope" value="Archaea"/>
</dbReference>
<dbReference type="Proteomes" id="UP000002518">
    <property type="component" value="Chromosome"/>
</dbReference>
<dbReference type="GO" id="GO:0103023">
    <property type="term" value="F:ITPase activity"/>
    <property type="evidence" value="ECO:0007669"/>
    <property type="project" value="UniProtKB-EC"/>
</dbReference>
<dbReference type="GO" id="GO:0046872">
    <property type="term" value="F:metal ion binding"/>
    <property type="evidence" value="ECO:0007669"/>
    <property type="project" value="UniProtKB-KW"/>
</dbReference>
<dbReference type="GO" id="GO:0000166">
    <property type="term" value="F:nucleotide binding"/>
    <property type="evidence" value="ECO:0007669"/>
    <property type="project" value="UniProtKB-KW"/>
</dbReference>
<dbReference type="GO" id="GO:0017111">
    <property type="term" value="F:ribonucleoside triphosphate phosphatase activity"/>
    <property type="evidence" value="ECO:0000250"/>
    <property type="project" value="UniProtKB"/>
</dbReference>
<dbReference type="GO" id="GO:0009117">
    <property type="term" value="P:nucleotide metabolic process"/>
    <property type="evidence" value="ECO:0007669"/>
    <property type="project" value="UniProtKB-KW"/>
</dbReference>
<dbReference type="GO" id="GO:0006772">
    <property type="term" value="P:thiamine metabolic process"/>
    <property type="evidence" value="ECO:0007669"/>
    <property type="project" value="TreeGrafter"/>
</dbReference>
<dbReference type="Gene3D" id="3.90.950.10">
    <property type="match status" value="1"/>
</dbReference>
<dbReference type="HAMAP" id="MF_00648">
    <property type="entry name" value="Non_canon_purine_NTPase_YjjX"/>
    <property type="match status" value="1"/>
</dbReference>
<dbReference type="InterPro" id="IPR029001">
    <property type="entry name" value="ITPase-like_fam"/>
</dbReference>
<dbReference type="InterPro" id="IPR002786">
    <property type="entry name" value="Non_canon_purine_NTPase"/>
</dbReference>
<dbReference type="InterPro" id="IPR026533">
    <property type="entry name" value="NTPase/PRRC1"/>
</dbReference>
<dbReference type="InterPro" id="IPR050299">
    <property type="entry name" value="YjjX_NTPase"/>
</dbReference>
<dbReference type="PANTHER" id="PTHR34699">
    <property type="match status" value="1"/>
</dbReference>
<dbReference type="PANTHER" id="PTHR34699:SF2">
    <property type="entry name" value="NON-CANONICAL PURINE NTP PHOSPHATASE_PRRC1 DOMAIN-CONTAINING PROTEIN"/>
    <property type="match status" value="1"/>
</dbReference>
<dbReference type="Pfam" id="PF01931">
    <property type="entry name" value="NTPase_I-T"/>
    <property type="match status" value="1"/>
</dbReference>
<dbReference type="SUPFAM" id="SSF52972">
    <property type="entry name" value="ITPase-like"/>
    <property type="match status" value="1"/>
</dbReference>
<protein>
    <recommendedName>
        <fullName evidence="1">Probable inosine/xanthosine triphosphatase</fullName>
        <shortName evidence="1">ITPase/XTPase</shortName>
        <ecNumber evidence="1">3.6.1.73</ecNumber>
    </recommendedName>
    <alternativeName>
        <fullName evidence="1">Non-canonical purine NTP phosphatase</fullName>
    </alternativeName>
    <alternativeName>
        <fullName evidence="1">Non-standard purine NTP phosphatase</fullName>
    </alternativeName>
    <alternativeName>
        <fullName evidence="1">Nucleoside-triphosphate phosphatase</fullName>
        <shortName evidence="1">NTPase</shortName>
    </alternativeName>
</protein>
<accession>Q9YDY1</accession>
<name>NCPP_AERPE</name>
<feature type="chain" id="PRO_0000156357" description="Probable inosine/xanthosine triphosphatase">
    <location>
        <begin position="1"/>
        <end position="197"/>
    </location>
</feature>
<feature type="binding site" evidence="1">
    <location>
        <begin position="9"/>
        <end position="14"/>
    </location>
    <ligand>
        <name>substrate</name>
    </ligand>
</feature>
<feature type="binding site" evidence="1">
    <location>
        <position position="36"/>
    </location>
    <ligand>
        <name>Mg(2+)</name>
        <dbReference type="ChEBI" id="CHEBI:18420"/>
    </ligand>
</feature>
<feature type="binding site" evidence="1">
    <location>
        <position position="65"/>
    </location>
    <ligand>
        <name>Mg(2+)</name>
        <dbReference type="ChEBI" id="CHEBI:18420"/>
    </ligand>
</feature>
<keyword id="KW-0378">Hydrolase</keyword>
<keyword id="KW-0460">Magnesium</keyword>
<keyword id="KW-0464">Manganese</keyword>
<keyword id="KW-0479">Metal-binding</keyword>
<keyword id="KW-0546">Nucleotide metabolism</keyword>
<keyword id="KW-0547">Nucleotide-binding</keyword>
<keyword id="KW-1185">Reference proteome</keyword>
<comment type="function">
    <text evidence="1">Phosphatase that hydrolyzes non-canonical purine nucleotides such as XTP and ITP to their respective diphosphate derivatives. Probably excludes non-canonical purines from DNA/RNA precursor pool, thus preventing their incorporation into DNA/RNA and avoiding chromosomal lesions.</text>
</comment>
<comment type="catalytic activity">
    <reaction evidence="1">
        <text>XTP + H2O = XDP + phosphate + H(+)</text>
        <dbReference type="Rhea" id="RHEA:28406"/>
        <dbReference type="ChEBI" id="CHEBI:15377"/>
        <dbReference type="ChEBI" id="CHEBI:15378"/>
        <dbReference type="ChEBI" id="CHEBI:43474"/>
        <dbReference type="ChEBI" id="CHEBI:59884"/>
        <dbReference type="ChEBI" id="CHEBI:61314"/>
        <dbReference type="EC" id="3.6.1.73"/>
    </reaction>
</comment>
<comment type="catalytic activity">
    <reaction evidence="1">
        <text>ITP + H2O = IDP + phosphate + H(+)</text>
        <dbReference type="Rhea" id="RHEA:28330"/>
        <dbReference type="ChEBI" id="CHEBI:15377"/>
        <dbReference type="ChEBI" id="CHEBI:15378"/>
        <dbReference type="ChEBI" id="CHEBI:43474"/>
        <dbReference type="ChEBI" id="CHEBI:58280"/>
        <dbReference type="ChEBI" id="CHEBI:61402"/>
        <dbReference type="EC" id="3.6.1.73"/>
    </reaction>
</comment>
<comment type="cofactor">
    <cofactor evidence="1">
        <name>Mg(2+)</name>
        <dbReference type="ChEBI" id="CHEBI:18420"/>
    </cofactor>
    <cofactor evidence="1">
        <name>Mn(2+)</name>
        <dbReference type="ChEBI" id="CHEBI:29035"/>
    </cofactor>
    <text evidence="1">Binds 1 divalent metal cation per subunit; can use either Mg(2+) or Mn(2+).</text>
</comment>
<comment type="subunit">
    <text evidence="1">Homodimer.</text>
</comment>
<comment type="similarity">
    <text evidence="1">Belongs to the YjjX NTPase family.</text>
</comment>
<organism>
    <name type="scientific">Aeropyrum pernix (strain ATCC 700893 / DSM 11879 / JCM 9820 / NBRC 100138 / K1)</name>
    <dbReference type="NCBI Taxonomy" id="272557"/>
    <lineage>
        <taxon>Archaea</taxon>
        <taxon>Thermoproteota</taxon>
        <taxon>Thermoprotei</taxon>
        <taxon>Desulfurococcales</taxon>
        <taxon>Desulfurococcaceae</taxon>
        <taxon>Aeropyrum</taxon>
    </lineage>
</organism>
<reference key="1">
    <citation type="journal article" date="1999" name="DNA Res.">
        <title>Complete genome sequence of an aerobic hyper-thermophilic crenarchaeon, Aeropyrum pernix K1.</title>
        <authorList>
            <person name="Kawarabayasi Y."/>
            <person name="Hino Y."/>
            <person name="Horikawa H."/>
            <person name="Yamazaki S."/>
            <person name="Haikawa Y."/>
            <person name="Jin-no K."/>
            <person name="Takahashi M."/>
            <person name="Sekine M."/>
            <person name="Baba S."/>
            <person name="Ankai A."/>
            <person name="Kosugi H."/>
            <person name="Hosoyama A."/>
            <person name="Fukui S."/>
            <person name="Nagai Y."/>
            <person name="Nishijima K."/>
            <person name="Nakazawa H."/>
            <person name="Takamiya M."/>
            <person name="Masuda S."/>
            <person name="Funahashi T."/>
            <person name="Tanaka T."/>
            <person name="Kudoh Y."/>
            <person name="Yamazaki J."/>
            <person name="Kushida N."/>
            <person name="Oguchi A."/>
            <person name="Aoki K."/>
            <person name="Kubota K."/>
            <person name="Nakamura Y."/>
            <person name="Nomura N."/>
            <person name="Sako Y."/>
            <person name="Kikuchi H."/>
        </authorList>
    </citation>
    <scope>NUCLEOTIDE SEQUENCE [LARGE SCALE GENOMIC DNA]</scope>
    <source>
        <strain>ATCC 700893 / DSM 11879 / JCM 9820 / NBRC 100138 / K1</strain>
    </source>
</reference>
<sequence length="197" mass="20449">MAVTVAVGTSNPIKYRAVLRAFSRYYDVRVVMVSVDSGVGPQPSGVADVVGGALARAVRAVEKADSYFGVGVEAGPIEFPASGGYVETQVAAIVDRDCRATIGMSPSFEVDRRVLALMLDGVEMEKAVGVERHGGLGESVGFVGVATSGAVTRQDLTEHAVIMALIPRLMGYGSIATVEEIAAQAGASVECRSTRAI</sequence>
<proteinExistence type="inferred from homology"/>
<evidence type="ECO:0000255" key="1">
    <source>
        <dbReference type="HAMAP-Rule" id="MF_00648"/>
    </source>
</evidence>